<comment type="function">
    <text evidence="3">Converts guanidinoacetate to creatine, using S-adenosylmethionine as the methyl donor. Important in nervous system development.</text>
</comment>
<comment type="catalytic activity">
    <reaction evidence="4">
        <text>guanidinoacetate + S-adenosyl-L-methionine = creatine + S-adenosyl-L-homocysteine + H(+)</text>
        <dbReference type="Rhea" id="RHEA:10656"/>
        <dbReference type="ChEBI" id="CHEBI:15378"/>
        <dbReference type="ChEBI" id="CHEBI:57742"/>
        <dbReference type="ChEBI" id="CHEBI:57856"/>
        <dbReference type="ChEBI" id="CHEBI:57947"/>
        <dbReference type="ChEBI" id="CHEBI:59789"/>
        <dbReference type="EC" id="2.1.1.2"/>
    </reaction>
</comment>
<comment type="pathway">
    <text>Amine and polyamine biosynthesis; creatine biosynthesis; creatine from L-arginine and glycine: step 2/2.</text>
</comment>
<comment type="subunit">
    <text evidence="1">Monomer.</text>
</comment>
<comment type="similarity">
    <text evidence="4">Belongs to the class I-like SAM-binding methyltransferase superfamily. RMT2 methyltransferase family.</text>
</comment>
<dbReference type="EC" id="2.1.1.2"/>
<dbReference type="EMBL" id="AF425745">
    <property type="protein sequence ID" value="AAQ13341.1"/>
    <property type="molecule type" value="mRNA"/>
</dbReference>
<dbReference type="EMBL" id="BC107607">
    <property type="protein sequence ID" value="AAI07608.1"/>
    <property type="molecule type" value="mRNA"/>
</dbReference>
<dbReference type="RefSeq" id="NP_001099065.1">
    <property type="nucleotide sequence ID" value="NM_001105595.1"/>
</dbReference>
<dbReference type="SMR" id="Q71N41"/>
<dbReference type="FunCoup" id="Q71N41">
    <property type="interactions" value="1438"/>
</dbReference>
<dbReference type="STRING" id="7955.ENSDARP00000095135"/>
<dbReference type="PaxDb" id="7955-ENSDARP00000095135"/>
<dbReference type="Ensembl" id="ENSDART00000104360">
    <property type="protein sequence ID" value="ENSDARP00000095135"/>
    <property type="gene ID" value="ENSDARG00000070844"/>
</dbReference>
<dbReference type="Ensembl" id="ENSDART00000193862">
    <property type="protein sequence ID" value="ENSDARP00000156721"/>
    <property type="gene ID" value="ENSDARG00000109945"/>
</dbReference>
<dbReference type="GeneID" id="796865"/>
<dbReference type="KEGG" id="dre:796865"/>
<dbReference type="AGR" id="ZFIN:ZDB-GENE-051030-97"/>
<dbReference type="CTD" id="2593"/>
<dbReference type="ZFIN" id="ZDB-GENE-051030-97">
    <property type="gene designation" value="gamt"/>
</dbReference>
<dbReference type="eggNOG" id="KOG1709">
    <property type="taxonomic scope" value="Eukaryota"/>
</dbReference>
<dbReference type="HOGENOM" id="CLU_102800_0_0_1"/>
<dbReference type="InParanoid" id="Q71N41"/>
<dbReference type="OMA" id="HKMITPT"/>
<dbReference type="OrthoDB" id="19014at2759"/>
<dbReference type="PhylomeDB" id="Q71N41"/>
<dbReference type="TreeFam" id="TF328555"/>
<dbReference type="Reactome" id="R-DRE-71288">
    <property type="pathway name" value="Creatine metabolism"/>
</dbReference>
<dbReference type="UniPathway" id="UPA00104">
    <property type="reaction ID" value="UER00580"/>
</dbReference>
<dbReference type="PRO" id="PR:Q71N41"/>
<dbReference type="Proteomes" id="UP000000437">
    <property type="component" value="Alternate scaffold 11"/>
</dbReference>
<dbReference type="Proteomes" id="UP000000437">
    <property type="component" value="Chromosome 11"/>
</dbReference>
<dbReference type="Bgee" id="ENSDARG00000070844">
    <property type="expression patterns" value="Expressed in larva and 23 other cell types or tissues"/>
</dbReference>
<dbReference type="ExpressionAtlas" id="Q71N41">
    <property type="expression patterns" value="baseline and differential"/>
</dbReference>
<dbReference type="GO" id="GO:0005737">
    <property type="term" value="C:cytoplasm"/>
    <property type="evidence" value="ECO:0000318"/>
    <property type="project" value="GO_Central"/>
</dbReference>
<dbReference type="GO" id="GO:0005634">
    <property type="term" value="C:nucleus"/>
    <property type="evidence" value="ECO:0000318"/>
    <property type="project" value="GO_Central"/>
</dbReference>
<dbReference type="GO" id="GO:0030731">
    <property type="term" value="F:guanidinoacetate N-methyltransferase activity"/>
    <property type="evidence" value="ECO:0000318"/>
    <property type="project" value="GO_Central"/>
</dbReference>
<dbReference type="GO" id="GO:0006601">
    <property type="term" value="P:creatine biosynthetic process"/>
    <property type="evidence" value="ECO:0000318"/>
    <property type="project" value="GO_Central"/>
</dbReference>
<dbReference type="GO" id="GO:0032259">
    <property type="term" value="P:methylation"/>
    <property type="evidence" value="ECO:0007669"/>
    <property type="project" value="UniProtKB-KW"/>
</dbReference>
<dbReference type="CDD" id="cd02440">
    <property type="entry name" value="AdoMet_MTases"/>
    <property type="match status" value="1"/>
</dbReference>
<dbReference type="FunFam" id="3.40.50.150:FF:000096">
    <property type="entry name" value="Guanidinoacetate N-methyltransferase"/>
    <property type="match status" value="1"/>
</dbReference>
<dbReference type="Gene3D" id="3.40.50.150">
    <property type="entry name" value="Vaccinia Virus protein VP39"/>
    <property type="match status" value="1"/>
</dbReference>
<dbReference type="InterPro" id="IPR016550">
    <property type="entry name" value="GuanidinoAc_N-MeTrfase"/>
</dbReference>
<dbReference type="InterPro" id="IPR051038">
    <property type="entry name" value="RMT2/GAMT_Mtase"/>
</dbReference>
<dbReference type="InterPro" id="IPR026480">
    <property type="entry name" value="RMT2_dom"/>
</dbReference>
<dbReference type="InterPro" id="IPR029063">
    <property type="entry name" value="SAM-dependent_MTases_sf"/>
</dbReference>
<dbReference type="PANTHER" id="PTHR32379">
    <property type="entry name" value="GUANIDINOACETATE N-METHYLTRANSFERASE"/>
    <property type="match status" value="1"/>
</dbReference>
<dbReference type="PANTHER" id="PTHR32379:SF1">
    <property type="entry name" value="GUANIDINOACETATE N-METHYLTRANSFERASE"/>
    <property type="match status" value="1"/>
</dbReference>
<dbReference type="PIRSF" id="PIRSF009285">
    <property type="entry name" value="GAMT"/>
    <property type="match status" value="1"/>
</dbReference>
<dbReference type="SUPFAM" id="SSF53335">
    <property type="entry name" value="S-adenosyl-L-methionine-dependent methyltransferases"/>
    <property type="match status" value="1"/>
</dbReference>
<dbReference type="PROSITE" id="PS51559">
    <property type="entry name" value="SAM_RMT2"/>
    <property type="match status" value="1"/>
</dbReference>
<feature type="chain" id="PRO_0000228965" description="Guanidinoacetate N-methyltransferase">
    <location>
        <begin position="1"/>
        <end position="234"/>
    </location>
</feature>
<feature type="domain" description="RMT2" evidence="4">
    <location>
        <begin position="1"/>
        <end position="234"/>
    </location>
</feature>
<feature type="binding site" evidence="4">
    <location>
        <position position="18"/>
    </location>
    <ligand>
        <name>S-adenosyl-L-methionine</name>
        <dbReference type="ChEBI" id="CHEBI:59789"/>
    </ligand>
</feature>
<feature type="binding site" evidence="2 4">
    <location>
        <position position="40"/>
    </location>
    <ligand>
        <name>guanidinoacetate</name>
        <dbReference type="ChEBI" id="CHEBI:57742"/>
    </ligand>
</feature>
<feature type="binding site" evidence="2 4">
    <location>
        <position position="44"/>
    </location>
    <ligand>
        <name>guanidinoacetate</name>
        <dbReference type="ChEBI" id="CHEBI:57742"/>
    </ligand>
</feature>
<feature type="binding site" evidence="4">
    <location>
        <position position="48"/>
    </location>
    <ligand>
        <name>S-adenosyl-L-methionine</name>
        <dbReference type="ChEBI" id="CHEBI:59789"/>
    </ligand>
</feature>
<feature type="binding site" evidence="4">
    <location>
        <begin position="67"/>
        <end position="72"/>
    </location>
    <ligand>
        <name>S-adenosyl-L-methionine</name>
        <dbReference type="ChEBI" id="CHEBI:59789"/>
    </ligand>
</feature>
<feature type="binding site" evidence="4">
    <location>
        <begin position="88"/>
        <end position="90"/>
    </location>
    <ligand>
        <name>S-adenosyl-L-methionine</name>
        <dbReference type="ChEBI" id="CHEBI:59789"/>
    </ligand>
</feature>
<feature type="binding site" evidence="4">
    <location>
        <begin position="115"/>
        <end position="116"/>
    </location>
    <ligand>
        <name>S-adenosyl-L-methionine</name>
        <dbReference type="ChEBI" id="CHEBI:59789"/>
    </ligand>
</feature>
<feature type="binding site" evidence="2">
    <location>
        <position position="133"/>
    </location>
    <ligand>
        <name>guanidinoacetate</name>
        <dbReference type="ChEBI" id="CHEBI:57742"/>
    </ligand>
</feature>
<feature type="binding site" evidence="4">
    <location>
        <position position="133"/>
    </location>
    <ligand>
        <name>S-adenosyl-L-methionine</name>
        <dbReference type="ChEBI" id="CHEBI:59789"/>
    </ligand>
</feature>
<feature type="binding site" evidence="2">
    <location>
        <begin position="169"/>
        <end position="170"/>
    </location>
    <ligand>
        <name>guanidinoacetate</name>
        <dbReference type="ChEBI" id="CHEBI:57742"/>
    </ligand>
</feature>
<feature type="sequence conflict" description="In Ref. 1; AAQ13341." evidence="5" ref="1">
    <original>I</original>
    <variation>T</variation>
    <location>
        <position position="71"/>
    </location>
</feature>
<feature type="sequence conflict" description="In Ref. 1; AAQ13341." evidence="5" ref="1">
    <original>K</original>
    <variation>R</variation>
    <location>
        <position position="225"/>
    </location>
</feature>
<evidence type="ECO:0000250" key="1"/>
<evidence type="ECO:0000250" key="2">
    <source>
        <dbReference type="UniProtKB" id="P10868"/>
    </source>
</evidence>
<evidence type="ECO:0000250" key="3">
    <source>
        <dbReference type="UniProtKB" id="Q14353"/>
    </source>
</evidence>
<evidence type="ECO:0000255" key="4">
    <source>
        <dbReference type="PROSITE-ProRule" id="PRU00892"/>
    </source>
</evidence>
<evidence type="ECO:0000305" key="5"/>
<name>GAMT_DANRE</name>
<keyword id="KW-0489">Methyltransferase</keyword>
<keyword id="KW-1185">Reference proteome</keyword>
<keyword id="KW-0949">S-adenosyl-L-methionine</keyword>
<keyword id="KW-0808">Transferase</keyword>
<accession>Q71N41</accession>
<accession>Q3B7H3</accession>
<sequence>MSAAQPIFSKGENCKQVWHDANADYNAADTHLEIMGKPVMERWETPYMHSLATVAASKGGRVLEIGFGMAIAATKVESFPIEEHWIIECNDGVFQRLQEWAKSQPHKVVPLKGLWEEVAPTLPDNHFDGILYDTYPLSEETWHTHQFNFIKAHAHRMLKPGGVLTYCNLTSWGELLKNKYDNIDKMFQETQVPHLLEAGFKKEKISTTLMDISPPSECKYYSFNKMITPTIIKE</sequence>
<protein>
    <recommendedName>
        <fullName>Guanidinoacetate N-methyltransferase</fullName>
        <ecNumber>2.1.1.2</ecNumber>
    </recommendedName>
</protein>
<gene>
    <name type="primary">gamt</name>
    <name type="ORF">zgc:123136</name>
</gene>
<reference key="1">
    <citation type="submission" date="2001-09" db="EMBL/GenBank/DDBJ databases">
        <title>Molecular cloning of zebrafish guanidinoacetate N-methyltransferase (GAMT) gene.</title>
        <authorList>
            <person name="Hsiao C.D."/>
            <person name="Tsai W.Y."/>
            <person name="Tsai H.J."/>
        </authorList>
    </citation>
    <scope>NUCLEOTIDE SEQUENCE [MRNA]</scope>
    <source>
        <strain>AB</strain>
    </source>
</reference>
<reference key="2">
    <citation type="submission" date="2005-10" db="EMBL/GenBank/DDBJ databases">
        <authorList>
            <consortium name="NIH - Zebrafish Gene Collection (ZGC) project"/>
        </authorList>
    </citation>
    <scope>NUCLEOTIDE SEQUENCE [LARGE SCALE MRNA]</scope>
    <source>
        <strain>AB</strain>
        <tissue>Liver</tissue>
    </source>
</reference>
<organism>
    <name type="scientific">Danio rerio</name>
    <name type="common">Zebrafish</name>
    <name type="synonym">Brachydanio rerio</name>
    <dbReference type="NCBI Taxonomy" id="7955"/>
    <lineage>
        <taxon>Eukaryota</taxon>
        <taxon>Metazoa</taxon>
        <taxon>Chordata</taxon>
        <taxon>Craniata</taxon>
        <taxon>Vertebrata</taxon>
        <taxon>Euteleostomi</taxon>
        <taxon>Actinopterygii</taxon>
        <taxon>Neopterygii</taxon>
        <taxon>Teleostei</taxon>
        <taxon>Ostariophysi</taxon>
        <taxon>Cypriniformes</taxon>
        <taxon>Danionidae</taxon>
        <taxon>Danioninae</taxon>
        <taxon>Danio</taxon>
    </lineage>
</organism>
<proteinExistence type="evidence at transcript level"/>